<sequence length="284" mass="32982">MDGIKKKMIAMKLEKENAMERAVQYEELLKKKEEEREKRESEIAELNTKMKQAQIDCDEVQETLQEQMNKLEETDKRATNAEAEVAAMTRRIRLLEEDLEVSSSRLTETLTKLEEASKTAEESERGRKDLEIRSIADDERLNQLEDQQKEAKYIAEDADRKYDEAARKLAIAEVDFKRAEARLEAAESKIVELEEELRVIGNNMKALEISEQESAQREESYEETIRDLTERLKAAEQRATEAERQVSKLQNEVDHLEDDLLAEKERYKALSGELDQTFAELTGY</sequence>
<reference key="1">
    <citation type="submission" date="1996-02" db="EMBL/GenBank/DDBJ databases">
        <title>Comparison of the amino acid sequences for Schistosoma haematobium tropomyosin and S. japonicum tropomyosin with that of S. mansoni tropomyosin.</title>
        <authorList>
            <person name="Nicholson L.J."/>
            <person name="Karim A.M."/>
            <person name="Loverde P.T."/>
        </authorList>
    </citation>
    <scope>NUCLEOTIDE SEQUENCE [MRNA]</scope>
</reference>
<keyword id="KW-0175">Coiled coil</keyword>
<keyword id="KW-0677">Repeat</keyword>
<organism>
    <name type="scientific">Schistosoma haematobium</name>
    <name type="common">Blood fluke</name>
    <dbReference type="NCBI Taxonomy" id="6185"/>
    <lineage>
        <taxon>Eukaryota</taxon>
        <taxon>Metazoa</taxon>
        <taxon>Spiralia</taxon>
        <taxon>Lophotrochozoa</taxon>
        <taxon>Platyhelminthes</taxon>
        <taxon>Trematoda</taxon>
        <taxon>Digenea</taxon>
        <taxon>Strigeidida</taxon>
        <taxon>Schistosomatoidea</taxon>
        <taxon>Schistosomatidae</taxon>
        <taxon>Schistosoma</taxon>
    </lineage>
</organism>
<name>TPM_SCHHA</name>
<protein>
    <recommendedName>
        <fullName>Tropomyosin</fullName>
    </recommendedName>
</protein>
<evidence type="ECO:0000250" key="1"/>
<evidence type="ECO:0000256" key="2">
    <source>
        <dbReference type="SAM" id="MobiDB-lite"/>
    </source>
</evidence>
<evidence type="ECO:0000305" key="3"/>
<feature type="chain" id="PRO_0000205654" description="Tropomyosin">
    <location>
        <begin position="1"/>
        <end position="284"/>
    </location>
</feature>
<feature type="region of interest" description="Disordered" evidence="2">
    <location>
        <begin position="111"/>
        <end position="131"/>
    </location>
</feature>
<feature type="coiled-coil region">
    <location>
        <begin position="1"/>
        <end position="284"/>
    </location>
</feature>
<proteinExistence type="evidence at transcript level"/>
<comment type="function">
    <text>Tropomyosin, in association with the troponin complex, plays a central role in the calcium dependent regulation of muscle contraction.</text>
</comment>
<comment type="subunit">
    <text evidence="1">Homodimer.</text>
</comment>
<comment type="domain">
    <text>The molecule is in a coiled coil structure that is formed by 2 polypeptide chains. The sequence exhibits a prominent seven-residues periodicity.</text>
</comment>
<comment type="similarity">
    <text evidence="3">Belongs to the tropomyosin family.</text>
</comment>
<dbReference type="EMBL" id="L76202">
    <property type="protein sequence ID" value="AAA88530.1"/>
    <property type="molecule type" value="mRNA"/>
</dbReference>
<dbReference type="SMR" id="Q26503"/>
<dbReference type="FunFam" id="1.20.5.170:FF:000001">
    <property type="entry name" value="Tropomyosin alpha-1 chain isoform 1"/>
    <property type="match status" value="1"/>
</dbReference>
<dbReference type="FunFam" id="1.20.5.340:FF:000001">
    <property type="entry name" value="Tropomyosin alpha-1 chain isoform 2"/>
    <property type="match status" value="1"/>
</dbReference>
<dbReference type="Gene3D" id="1.20.5.170">
    <property type="match status" value="2"/>
</dbReference>
<dbReference type="Gene3D" id="1.20.5.340">
    <property type="match status" value="1"/>
</dbReference>
<dbReference type="InterPro" id="IPR000533">
    <property type="entry name" value="Tropomyosin"/>
</dbReference>
<dbReference type="PANTHER" id="PTHR19269">
    <property type="entry name" value="TROPOMYOSIN"/>
    <property type="match status" value="1"/>
</dbReference>
<dbReference type="Pfam" id="PF00261">
    <property type="entry name" value="Tropomyosin"/>
    <property type="match status" value="1"/>
</dbReference>
<dbReference type="PRINTS" id="PR00194">
    <property type="entry name" value="TROPOMYOSIN"/>
</dbReference>
<dbReference type="SUPFAM" id="SSF57997">
    <property type="entry name" value="Tropomyosin"/>
    <property type="match status" value="1"/>
</dbReference>
<dbReference type="PROSITE" id="PS00326">
    <property type="entry name" value="TROPOMYOSIN"/>
    <property type="match status" value="1"/>
</dbReference>
<accession>Q26503</accession>